<proteinExistence type="evidence at protein level"/>
<protein>
    <recommendedName>
        <fullName>Homeobox protein CDX-1</fullName>
    </recommendedName>
    <alternativeName>
        <fullName>Caudal-type homeobox protein 1</fullName>
    </alternativeName>
</protein>
<organism>
    <name type="scientific">Mus musculus</name>
    <name type="common">Mouse</name>
    <dbReference type="NCBI Taxonomy" id="10090"/>
    <lineage>
        <taxon>Eukaryota</taxon>
        <taxon>Metazoa</taxon>
        <taxon>Chordata</taxon>
        <taxon>Craniata</taxon>
        <taxon>Vertebrata</taxon>
        <taxon>Euteleostomi</taxon>
        <taxon>Mammalia</taxon>
        <taxon>Eutheria</taxon>
        <taxon>Euarchontoglires</taxon>
        <taxon>Glires</taxon>
        <taxon>Rodentia</taxon>
        <taxon>Myomorpha</taxon>
        <taxon>Muroidea</taxon>
        <taxon>Muridae</taxon>
        <taxon>Murinae</taxon>
        <taxon>Mus</taxon>
        <taxon>Mus</taxon>
    </lineage>
</organism>
<evidence type="ECO:0000250" key="1">
    <source>
        <dbReference type="UniProtKB" id="P47902"/>
    </source>
</evidence>
<evidence type="ECO:0000255" key="2">
    <source>
        <dbReference type="PROSITE-ProRule" id="PRU00108"/>
    </source>
</evidence>
<evidence type="ECO:0000256" key="3">
    <source>
        <dbReference type="SAM" id="MobiDB-lite"/>
    </source>
</evidence>
<evidence type="ECO:0000305" key="4"/>
<name>CDX1_MOUSE</name>
<keyword id="KW-0010">Activator</keyword>
<keyword id="KW-0217">Developmental protein</keyword>
<keyword id="KW-0238">DNA-binding</keyword>
<keyword id="KW-0371">Homeobox</keyword>
<keyword id="KW-0539">Nucleus</keyword>
<keyword id="KW-1185">Reference proteome</keyword>
<keyword id="KW-0804">Transcription</keyword>
<keyword id="KW-0805">Transcription regulation</keyword>
<sequence>MYVGYVLDKDSPVYPGPARPSSLGLGPPTYAPPGPAPAPPQYPDFAGYTHVEPAPAPPPTWAAPFPAPKDDWAAAYGPGPTASAASPAPLAFGPPPDFSPVPAPPGPGPGILAQSLGAPGAPSSPGAPRRTPYEWMRRSVAAAGGGGSGKTRTKDKYRVVYTDHQRLELEKEFHYSRYITIRRKSELAANLGLTERQVKIWFQNRRAKERKVNKKKQQQQQPLPPTQLPLPLDGTPTPSGPPLGSLCPTNAGLLGTPSPVPVKEEFLP</sequence>
<accession>P18111</accession>
<accession>Q8VCF7</accession>
<comment type="function">
    <text evidence="1">Plays a role in transcriptional regulation. Involved in activated KRAS-mediated transcriptional activation of PRKD1 in colorectal cancer (CRC) cells. Binds to the PRKD1 promoter in colorectal cancer (CRC) cells. Could play a role in the terminal differentiation of the intestine. Binds preferentially to methylated DNA.</text>
</comment>
<comment type="interaction">
    <interactant intactId="EBI-21005290">
        <id>P18111</id>
    </interactant>
    <interactant intactId="EBI-355371">
        <id>P20226</id>
        <label>TBP</label>
    </interactant>
    <organismsDiffer>true</organismsDiffer>
    <experiments>5</experiments>
</comment>
<comment type="subcellular location">
    <subcellularLocation>
        <location>Nucleus</location>
    </subcellularLocation>
</comment>
<comment type="tissue specificity">
    <text>Intestinal epithelium.</text>
</comment>
<comment type="similarity">
    <text evidence="4">Belongs to the Caudal homeobox family.</text>
</comment>
<gene>
    <name type="primary">Cdx1</name>
    <name type="synonym">Cdx-1</name>
</gene>
<feature type="chain" id="PRO_0000048847" description="Homeobox protein CDX-1">
    <location>
        <begin position="1"/>
        <end position="268"/>
    </location>
</feature>
<feature type="DNA-binding region" description="Homeobox" evidence="2">
    <location>
        <begin position="154"/>
        <end position="213"/>
    </location>
</feature>
<feature type="region of interest" description="Disordered" evidence="3">
    <location>
        <begin position="1"/>
        <end position="152"/>
    </location>
</feature>
<feature type="region of interest" description="Interaction with DNA" evidence="1">
    <location>
        <begin position="157"/>
        <end position="178"/>
    </location>
</feature>
<feature type="region of interest" description="Interaction with 5-mCpG DNA" evidence="1">
    <location>
        <begin position="196"/>
        <end position="207"/>
    </location>
</feature>
<feature type="region of interest" description="Disordered" evidence="3">
    <location>
        <begin position="209"/>
        <end position="268"/>
    </location>
</feature>
<feature type="compositionally biased region" description="Pro residues" evidence="3">
    <location>
        <begin position="29"/>
        <end position="42"/>
    </location>
</feature>
<feature type="compositionally biased region" description="Pro residues" evidence="3">
    <location>
        <begin position="54"/>
        <end position="67"/>
    </location>
</feature>
<feature type="compositionally biased region" description="Low complexity" evidence="3">
    <location>
        <begin position="73"/>
        <end position="91"/>
    </location>
</feature>
<feature type="compositionally biased region" description="Pro residues" evidence="3">
    <location>
        <begin position="92"/>
        <end position="108"/>
    </location>
</feature>
<feature type="compositionally biased region" description="Low complexity" evidence="3">
    <location>
        <begin position="115"/>
        <end position="128"/>
    </location>
</feature>
<feature type="compositionally biased region" description="Low complexity" evidence="3">
    <location>
        <begin position="229"/>
        <end position="246"/>
    </location>
</feature>
<feature type="sequence conflict" description="In Ref. 3; AAH19986." evidence="4" ref="3">
    <original>P</original>
    <variation>Q</variation>
    <location>
        <position position="15"/>
    </location>
</feature>
<feature type="sequence conflict" description="In Ref. 2; AAA37412." evidence="4" ref="2">
    <original>G</original>
    <variation>C</variation>
    <location>
        <position position="146"/>
    </location>
</feature>
<feature type="sequence conflict" description="In Ref. 2; AAA37412." evidence="4" ref="2">
    <original>Y</original>
    <variation>S</variation>
    <location>
        <position position="157"/>
    </location>
</feature>
<dbReference type="EMBL" id="M37163">
    <property type="protein sequence ID" value="AAA37412.1"/>
    <property type="status" value="ALT_SEQ"/>
    <property type="molecule type" value="mRNA"/>
</dbReference>
<dbReference type="EMBL" id="M80463">
    <property type="protein sequence ID" value="AAA16447.1"/>
    <property type="status" value="ALT_SEQ"/>
    <property type="molecule type" value="Unassigned_DNA"/>
</dbReference>
<dbReference type="EMBL" id="BC019986">
    <property type="protein sequence ID" value="AAH19986.1"/>
    <property type="molecule type" value="mRNA"/>
</dbReference>
<dbReference type="CCDS" id="CCDS29279.1"/>
<dbReference type="PIR" id="A49303">
    <property type="entry name" value="A49303"/>
</dbReference>
<dbReference type="RefSeq" id="NP_034010.3">
    <property type="nucleotide sequence ID" value="NM_009880.3"/>
</dbReference>
<dbReference type="SMR" id="P18111"/>
<dbReference type="BioGRID" id="198663">
    <property type="interactions" value="6"/>
</dbReference>
<dbReference type="FunCoup" id="P18111">
    <property type="interactions" value="715"/>
</dbReference>
<dbReference type="IntAct" id="P18111">
    <property type="interactions" value="10"/>
</dbReference>
<dbReference type="STRING" id="10090.ENSMUSP00000025521"/>
<dbReference type="GlyGen" id="P18111">
    <property type="glycosylation" value="3 sites"/>
</dbReference>
<dbReference type="PhosphoSitePlus" id="P18111"/>
<dbReference type="PaxDb" id="10090-ENSMUSP00000025521"/>
<dbReference type="PeptideAtlas" id="P18111"/>
<dbReference type="ProteomicsDB" id="281150"/>
<dbReference type="Antibodypedia" id="27929">
    <property type="antibodies" value="507 antibodies from 33 providers"/>
</dbReference>
<dbReference type="DNASU" id="12590"/>
<dbReference type="Ensembl" id="ENSMUST00000025521.9">
    <property type="protein sequence ID" value="ENSMUSP00000025521.9"/>
    <property type="gene ID" value="ENSMUSG00000024619.9"/>
</dbReference>
<dbReference type="GeneID" id="12590"/>
<dbReference type="KEGG" id="mmu:12590"/>
<dbReference type="UCSC" id="uc008fbj.2">
    <property type="organism name" value="mouse"/>
</dbReference>
<dbReference type="AGR" id="MGI:88360"/>
<dbReference type="CTD" id="1044"/>
<dbReference type="MGI" id="MGI:88360">
    <property type="gene designation" value="Cdx1"/>
</dbReference>
<dbReference type="VEuPathDB" id="HostDB:ENSMUSG00000024619"/>
<dbReference type="eggNOG" id="KOG0848">
    <property type="taxonomic scope" value="Eukaryota"/>
</dbReference>
<dbReference type="GeneTree" id="ENSGT00940000162069"/>
<dbReference type="HOGENOM" id="CLU_073177_1_0_1"/>
<dbReference type="InParanoid" id="P18111"/>
<dbReference type="OMA" id="DLHHGQP"/>
<dbReference type="OrthoDB" id="6159439at2759"/>
<dbReference type="PhylomeDB" id="P18111"/>
<dbReference type="TreeFam" id="TF351605"/>
<dbReference type="BioGRID-ORCS" id="12590">
    <property type="hits" value="0 hits in 80 CRISPR screens"/>
</dbReference>
<dbReference type="ChiTaRS" id="Cdx1">
    <property type="organism name" value="mouse"/>
</dbReference>
<dbReference type="PRO" id="PR:P18111"/>
<dbReference type="Proteomes" id="UP000000589">
    <property type="component" value="Chromosome 18"/>
</dbReference>
<dbReference type="RNAct" id="P18111">
    <property type="molecule type" value="protein"/>
</dbReference>
<dbReference type="Bgee" id="ENSMUSG00000024619">
    <property type="expression patterns" value="Expressed in left colon and 42 other cell types or tissues"/>
</dbReference>
<dbReference type="GO" id="GO:0005634">
    <property type="term" value="C:nucleus"/>
    <property type="evidence" value="ECO:0007669"/>
    <property type="project" value="UniProtKB-SubCell"/>
</dbReference>
<dbReference type="GO" id="GO:0001228">
    <property type="term" value="F:DNA-binding transcription activator activity, RNA polymerase II-specific"/>
    <property type="evidence" value="ECO:0007669"/>
    <property type="project" value="Ensembl"/>
</dbReference>
<dbReference type="GO" id="GO:0003700">
    <property type="term" value="F:DNA-binding transcription factor activity"/>
    <property type="evidence" value="ECO:0000314"/>
    <property type="project" value="UniProtKB"/>
</dbReference>
<dbReference type="GO" id="GO:0008327">
    <property type="term" value="F:methyl-CpG binding"/>
    <property type="evidence" value="ECO:0000250"/>
    <property type="project" value="UniProtKB"/>
</dbReference>
<dbReference type="GO" id="GO:0000978">
    <property type="term" value="F:RNA polymerase II cis-regulatory region sequence-specific DNA binding"/>
    <property type="evidence" value="ECO:0007669"/>
    <property type="project" value="Ensembl"/>
</dbReference>
<dbReference type="GO" id="GO:0000976">
    <property type="term" value="F:transcription cis-regulatory region binding"/>
    <property type="evidence" value="ECO:0000250"/>
    <property type="project" value="UniProtKB"/>
</dbReference>
<dbReference type="GO" id="GO:0009952">
    <property type="term" value="P:anterior/posterior pattern specification"/>
    <property type="evidence" value="ECO:0000315"/>
    <property type="project" value="MGI"/>
</dbReference>
<dbReference type="GO" id="GO:0060349">
    <property type="term" value="P:bone morphogenesis"/>
    <property type="evidence" value="ECO:0000315"/>
    <property type="project" value="MGI"/>
</dbReference>
<dbReference type="GO" id="GO:0007389">
    <property type="term" value="P:pattern specification process"/>
    <property type="evidence" value="ECO:0000315"/>
    <property type="project" value="MGI"/>
</dbReference>
<dbReference type="GO" id="GO:0045944">
    <property type="term" value="P:positive regulation of transcription by RNA polymerase II"/>
    <property type="evidence" value="ECO:0000314"/>
    <property type="project" value="MGI"/>
</dbReference>
<dbReference type="GO" id="GO:0014807">
    <property type="term" value="P:regulation of somitogenesis"/>
    <property type="evidence" value="ECO:0000315"/>
    <property type="project" value="UniProtKB"/>
</dbReference>
<dbReference type="CDD" id="cd00086">
    <property type="entry name" value="homeodomain"/>
    <property type="match status" value="1"/>
</dbReference>
<dbReference type="FunFam" id="1.10.10.60:FF:000089">
    <property type="entry name" value="Caudal type homeobox 4"/>
    <property type="match status" value="1"/>
</dbReference>
<dbReference type="Gene3D" id="1.10.10.60">
    <property type="entry name" value="Homeodomain-like"/>
    <property type="match status" value="1"/>
</dbReference>
<dbReference type="InterPro" id="IPR006820">
    <property type="entry name" value="Caudal_activation_dom"/>
</dbReference>
<dbReference type="InterPro" id="IPR047152">
    <property type="entry name" value="Caudal_homeobox"/>
</dbReference>
<dbReference type="InterPro" id="IPR001356">
    <property type="entry name" value="HD"/>
</dbReference>
<dbReference type="InterPro" id="IPR020479">
    <property type="entry name" value="HD_metazoa"/>
</dbReference>
<dbReference type="InterPro" id="IPR017970">
    <property type="entry name" value="Homeobox_CS"/>
</dbReference>
<dbReference type="InterPro" id="IPR009057">
    <property type="entry name" value="Homeodomain-like_sf"/>
</dbReference>
<dbReference type="InterPro" id="IPR000047">
    <property type="entry name" value="HTH_motif"/>
</dbReference>
<dbReference type="PANTHER" id="PTHR24332">
    <property type="entry name" value="HOMEOBOX PROTEIN CDX"/>
    <property type="match status" value="1"/>
</dbReference>
<dbReference type="PANTHER" id="PTHR24332:SF16">
    <property type="entry name" value="HOMEOBOX PROTEIN CDX-1"/>
    <property type="match status" value="1"/>
</dbReference>
<dbReference type="Pfam" id="PF04731">
    <property type="entry name" value="Caudal_act"/>
    <property type="match status" value="1"/>
</dbReference>
<dbReference type="Pfam" id="PF00046">
    <property type="entry name" value="Homeodomain"/>
    <property type="match status" value="1"/>
</dbReference>
<dbReference type="PRINTS" id="PR00024">
    <property type="entry name" value="HOMEOBOX"/>
</dbReference>
<dbReference type="PRINTS" id="PR00031">
    <property type="entry name" value="HTHREPRESSR"/>
</dbReference>
<dbReference type="SMART" id="SM00389">
    <property type="entry name" value="HOX"/>
    <property type="match status" value="1"/>
</dbReference>
<dbReference type="SUPFAM" id="SSF46689">
    <property type="entry name" value="Homeodomain-like"/>
    <property type="match status" value="1"/>
</dbReference>
<dbReference type="PROSITE" id="PS00027">
    <property type="entry name" value="HOMEOBOX_1"/>
    <property type="match status" value="1"/>
</dbReference>
<dbReference type="PROSITE" id="PS50071">
    <property type="entry name" value="HOMEOBOX_2"/>
    <property type="match status" value="1"/>
</dbReference>
<reference key="1">
    <citation type="journal article" date="1993" name="J. Biol. Chem.">
        <title>Isolation and characterization of the murine homeobox gene Cdx-1. Regulation of expression in intestinal epithelial cells.</title>
        <authorList>
            <person name="Hu Y."/>
            <person name="Kazenwadel J."/>
            <person name="James R."/>
        </authorList>
    </citation>
    <scope>NUCLEOTIDE SEQUENCE [MRNA]</scope>
    <source>
        <strain>BALB/cJ</strain>
    </source>
</reference>
<reference key="2">
    <citation type="journal article" date="1988" name="Genes Dev.">
        <title>A mouse gene homologous to the Drosophila gene caudal is expressed in epithelial cells from the embryonic intestine.</title>
        <authorList>
            <person name="Duprey P."/>
            <person name="Chowdhury K."/>
            <person name="Dressler G.R."/>
            <person name="Balling R."/>
            <person name="Simon D."/>
            <person name="Guenet J.-L."/>
            <person name="Gruss P."/>
        </authorList>
    </citation>
    <scope>NUCLEOTIDE SEQUENCE [GENOMIC DNA]</scope>
    <source>
        <tissue>Embryonic intestine</tissue>
    </source>
</reference>
<reference key="3">
    <citation type="journal article" date="2004" name="Genome Res.">
        <title>The status, quality, and expansion of the NIH full-length cDNA project: the Mammalian Gene Collection (MGC).</title>
        <authorList>
            <consortium name="The MGC Project Team"/>
        </authorList>
    </citation>
    <scope>NUCLEOTIDE SEQUENCE [LARGE SCALE MRNA]</scope>
    <source>
        <strain>FVB/N</strain>
        <tissue>Colon</tissue>
    </source>
</reference>